<organism>
    <name type="scientific">Yersinia pestis bv. Antiqua (strain Nepal516)</name>
    <dbReference type="NCBI Taxonomy" id="377628"/>
    <lineage>
        <taxon>Bacteria</taxon>
        <taxon>Pseudomonadati</taxon>
        <taxon>Pseudomonadota</taxon>
        <taxon>Gammaproteobacteria</taxon>
        <taxon>Enterobacterales</taxon>
        <taxon>Yersiniaceae</taxon>
        <taxon>Yersinia</taxon>
    </lineage>
</organism>
<comment type="function">
    <text evidence="1">Involved in the gluconeogenesis. Catalyzes stereospecifically the conversion of dihydroxyacetone phosphate (DHAP) to D-glyceraldehyde-3-phosphate (G3P).</text>
</comment>
<comment type="catalytic activity">
    <reaction evidence="1">
        <text>D-glyceraldehyde 3-phosphate = dihydroxyacetone phosphate</text>
        <dbReference type="Rhea" id="RHEA:18585"/>
        <dbReference type="ChEBI" id="CHEBI:57642"/>
        <dbReference type="ChEBI" id="CHEBI:59776"/>
        <dbReference type="EC" id="5.3.1.1"/>
    </reaction>
</comment>
<comment type="pathway">
    <text evidence="1">Carbohydrate biosynthesis; gluconeogenesis.</text>
</comment>
<comment type="pathway">
    <text evidence="1">Carbohydrate degradation; glycolysis; D-glyceraldehyde 3-phosphate from glycerone phosphate: step 1/1.</text>
</comment>
<comment type="subunit">
    <text evidence="1">Homodimer.</text>
</comment>
<comment type="subcellular location">
    <subcellularLocation>
        <location evidence="1">Cytoplasm</location>
    </subcellularLocation>
</comment>
<comment type="similarity">
    <text evidence="1">Belongs to the triosephosphate isomerase family.</text>
</comment>
<name>TPIS_YERPN</name>
<protein>
    <recommendedName>
        <fullName evidence="1">Triosephosphate isomerase</fullName>
        <shortName evidence="1">TIM</shortName>
        <shortName evidence="1">TPI</shortName>
        <ecNumber evidence="1">5.3.1.1</ecNumber>
    </recommendedName>
    <alternativeName>
        <fullName evidence="1">Triose-phosphate isomerase</fullName>
    </alternativeName>
</protein>
<sequence>MRHPLVMGNWKLNGSTHMVNELIAGLRKELSTVDGCGVAIAPPAIYLNQAKHELAGSRIALGAQNVDVNLSGAFTGETSAEMLKDIGAQYIIIGHSERRTYHQESDELIAKKFGVLKEIGLIPVLCIGESEAENEAGQTEAVCAKQLDAVLNTLGVKAFEGAVIAYEPIWAIGTGKSATPAQAQAVHKFIRDHIAKQDAAVAAQVIIQYGGSVNDKNAAELFTQPDIDGALVGGASLKADAFAVIVKAAAKAKKA</sequence>
<accession>Q1CD40</accession>
<accession>D1Q2C3</accession>
<evidence type="ECO:0000255" key="1">
    <source>
        <dbReference type="HAMAP-Rule" id="MF_00147"/>
    </source>
</evidence>
<proteinExistence type="inferred from homology"/>
<keyword id="KW-0963">Cytoplasm</keyword>
<keyword id="KW-0312">Gluconeogenesis</keyword>
<keyword id="KW-0324">Glycolysis</keyword>
<keyword id="KW-0413">Isomerase</keyword>
<feature type="chain" id="PRO_0000307601" description="Triosephosphate isomerase">
    <location>
        <begin position="1"/>
        <end position="255"/>
    </location>
</feature>
<feature type="active site" description="Electrophile" evidence="1">
    <location>
        <position position="95"/>
    </location>
</feature>
<feature type="active site" description="Proton acceptor" evidence="1">
    <location>
        <position position="167"/>
    </location>
</feature>
<feature type="binding site" evidence="1">
    <location>
        <begin position="9"/>
        <end position="11"/>
    </location>
    <ligand>
        <name>substrate</name>
    </ligand>
</feature>
<feature type="binding site" evidence="1">
    <location>
        <position position="173"/>
    </location>
    <ligand>
        <name>substrate</name>
    </ligand>
</feature>
<feature type="binding site" evidence="1">
    <location>
        <position position="212"/>
    </location>
    <ligand>
        <name>substrate</name>
    </ligand>
</feature>
<feature type="binding site" evidence="1">
    <location>
        <begin position="233"/>
        <end position="234"/>
    </location>
    <ligand>
        <name>substrate</name>
    </ligand>
</feature>
<gene>
    <name evidence="1" type="primary">tpiA</name>
    <name type="ordered locus">YPN_3763</name>
    <name type="ORF">YP516_4283</name>
</gene>
<dbReference type="EC" id="5.3.1.1" evidence="1"/>
<dbReference type="EMBL" id="CP000305">
    <property type="protein sequence ID" value="ABG20090.1"/>
    <property type="molecule type" value="Genomic_DNA"/>
</dbReference>
<dbReference type="EMBL" id="ACNQ01000019">
    <property type="protein sequence ID" value="EEO74676.1"/>
    <property type="molecule type" value="Genomic_DNA"/>
</dbReference>
<dbReference type="RefSeq" id="WP_002208959.1">
    <property type="nucleotide sequence ID" value="NZ_ACNQ01000019.1"/>
</dbReference>
<dbReference type="SMR" id="Q1CD40"/>
<dbReference type="GeneID" id="57974507"/>
<dbReference type="KEGG" id="ypn:YPN_3763"/>
<dbReference type="HOGENOM" id="CLU_024251_2_1_6"/>
<dbReference type="UniPathway" id="UPA00109">
    <property type="reaction ID" value="UER00189"/>
</dbReference>
<dbReference type="UniPathway" id="UPA00138"/>
<dbReference type="Proteomes" id="UP000008936">
    <property type="component" value="Chromosome"/>
</dbReference>
<dbReference type="GO" id="GO:0005829">
    <property type="term" value="C:cytosol"/>
    <property type="evidence" value="ECO:0007669"/>
    <property type="project" value="TreeGrafter"/>
</dbReference>
<dbReference type="GO" id="GO:0004807">
    <property type="term" value="F:triose-phosphate isomerase activity"/>
    <property type="evidence" value="ECO:0007669"/>
    <property type="project" value="UniProtKB-UniRule"/>
</dbReference>
<dbReference type="GO" id="GO:0006094">
    <property type="term" value="P:gluconeogenesis"/>
    <property type="evidence" value="ECO:0007669"/>
    <property type="project" value="UniProtKB-UniRule"/>
</dbReference>
<dbReference type="GO" id="GO:0046166">
    <property type="term" value="P:glyceraldehyde-3-phosphate biosynthetic process"/>
    <property type="evidence" value="ECO:0007669"/>
    <property type="project" value="TreeGrafter"/>
</dbReference>
<dbReference type="GO" id="GO:0019563">
    <property type="term" value="P:glycerol catabolic process"/>
    <property type="evidence" value="ECO:0007669"/>
    <property type="project" value="TreeGrafter"/>
</dbReference>
<dbReference type="GO" id="GO:0006096">
    <property type="term" value="P:glycolytic process"/>
    <property type="evidence" value="ECO:0007669"/>
    <property type="project" value="UniProtKB-UniRule"/>
</dbReference>
<dbReference type="CDD" id="cd00311">
    <property type="entry name" value="TIM"/>
    <property type="match status" value="1"/>
</dbReference>
<dbReference type="FunFam" id="3.20.20.70:FF:000020">
    <property type="entry name" value="Triosephosphate isomerase"/>
    <property type="match status" value="1"/>
</dbReference>
<dbReference type="Gene3D" id="3.20.20.70">
    <property type="entry name" value="Aldolase class I"/>
    <property type="match status" value="1"/>
</dbReference>
<dbReference type="HAMAP" id="MF_00147_B">
    <property type="entry name" value="TIM_B"/>
    <property type="match status" value="1"/>
</dbReference>
<dbReference type="InterPro" id="IPR013785">
    <property type="entry name" value="Aldolase_TIM"/>
</dbReference>
<dbReference type="InterPro" id="IPR035990">
    <property type="entry name" value="TIM_sf"/>
</dbReference>
<dbReference type="InterPro" id="IPR022896">
    <property type="entry name" value="TrioseP_Isoase_bac/euk"/>
</dbReference>
<dbReference type="InterPro" id="IPR000652">
    <property type="entry name" value="Triosephosphate_isomerase"/>
</dbReference>
<dbReference type="InterPro" id="IPR020861">
    <property type="entry name" value="Triosephosphate_isomerase_AS"/>
</dbReference>
<dbReference type="NCBIfam" id="TIGR00419">
    <property type="entry name" value="tim"/>
    <property type="match status" value="1"/>
</dbReference>
<dbReference type="PANTHER" id="PTHR21139">
    <property type="entry name" value="TRIOSEPHOSPHATE ISOMERASE"/>
    <property type="match status" value="1"/>
</dbReference>
<dbReference type="PANTHER" id="PTHR21139:SF42">
    <property type="entry name" value="TRIOSEPHOSPHATE ISOMERASE"/>
    <property type="match status" value="1"/>
</dbReference>
<dbReference type="Pfam" id="PF00121">
    <property type="entry name" value="TIM"/>
    <property type="match status" value="1"/>
</dbReference>
<dbReference type="SUPFAM" id="SSF51351">
    <property type="entry name" value="Triosephosphate isomerase (TIM)"/>
    <property type="match status" value="1"/>
</dbReference>
<dbReference type="PROSITE" id="PS00171">
    <property type="entry name" value="TIM_1"/>
    <property type="match status" value="1"/>
</dbReference>
<dbReference type="PROSITE" id="PS51440">
    <property type="entry name" value="TIM_2"/>
    <property type="match status" value="1"/>
</dbReference>
<reference key="1">
    <citation type="journal article" date="2006" name="J. Bacteriol.">
        <title>Complete genome sequence of Yersinia pestis strains Antiqua and Nepal516: evidence of gene reduction in an emerging pathogen.</title>
        <authorList>
            <person name="Chain P.S.G."/>
            <person name="Hu P."/>
            <person name="Malfatti S.A."/>
            <person name="Radnedge L."/>
            <person name="Larimer F."/>
            <person name="Vergez L.M."/>
            <person name="Worsham P."/>
            <person name="Chu M.C."/>
            <person name="Andersen G.L."/>
        </authorList>
    </citation>
    <scope>NUCLEOTIDE SEQUENCE [LARGE SCALE GENOMIC DNA]</scope>
    <source>
        <strain>Nepal516</strain>
    </source>
</reference>
<reference key="2">
    <citation type="submission" date="2009-04" db="EMBL/GenBank/DDBJ databases">
        <title>Yersinia pestis Nepal516A whole genome shotgun sequencing project.</title>
        <authorList>
            <person name="Plunkett G. III"/>
            <person name="Anderson B.D."/>
            <person name="Baumler D.J."/>
            <person name="Burland V."/>
            <person name="Cabot E.L."/>
            <person name="Glasner J.D."/>
            <person name="Mau B."/>
            <person name="Neeno-Eckwall E."/>
            <person name="Perna N.T."/>
            <person name="Munk A.C."/>
            <person name="Tapia R."/>
            <person name="Green L.D."/>
            <person name="Rogers Y.C."/>
            <person name="Detter J.C."/>
            <person name="Bruce D.C."/>
            <person name="Brettin T.S."/>
        </authorList>
    </citation>
    <scope>NUCLEOTIDE SEQUENCE [LARGE SCALE GENOMIC DNA]</scope>
    <source>
        <strain>Nepal516</strain>
    </source>
</reference>